<name>RNAS9_CHLAE</name>
<dbReference type="EMBL" id="AY330195">
    <property type="protein sequence ID" value="AAQ01505.1"/>
    <property type="molecule type" value="Genomic_DNA"/>
</dbReference>
<dbReference type="SMR" id="Q7YRH1"/>
<dbReference type="GlyCosmos" id="Q7YRH1">
    <property type="glycosylation" value="2 sites, No reported glycans"/>
</dbReference>
<dbReference type="GO" id="GO:0005576">
    <property type="term" value="C:extracellular region"/>
    <property type="evidence" value="ECO:0007669"/>
    <property type="project" value="UniProtKB-SubCell"/>
</dbReference>
<dbReference type="GO" id="GO:0003676">
    <property type="term" value="F:nucleic acid binding"/>
    <property type="evidence" value="ECO:0007669"/>
    <property type="project" value="InterPro"/>
</dbReference>
<dbReference type="GO" id="GO:0050830">
    <property type="term" value="P:defense response to Gram-positive bacterium"/>
    <property type="evidence" value="ECO:0007669"/>
    <property type="project" value="TreeGrafter"/>
</dbReference>
<dbReference type="CDD" id="cd00163">
    <property type="entry name" value="RNase_A"/>
    <property type="match status" value="1"/>
</dbReference>
<dbReference type="FunFam" id="3.10.130.10:FF:000003">
    <property type="entry name" value="Inactive ribonuclease-like protein 9"/>
    <property type="match status" value="1"/>
</dbReference>
<dbReference type="Gene3D" id="3.10.130.10">
    <property type="entry name" value="Ribonuclease A-like domain"/>
    <property type="match status" value="1"/>
</dbReference>
<dbReference type="InterPro" id="IPR001427">
    <property type="entry name" value="RNaseA"/>
</dbReference>
<dbReference type="InterPro" id="IPR036816">
    <property type="entry name" value="RNaseA-like_dom_sf"/>
</dbReference>
<dbReference type="InterPro" id="IPR023412">
    <property type="entry name" value="RNaseA_domain"/>
</dbReference>
<dbReference type="PANTHER" id="PTHR11437:SF14">
    <property type="entry name" value="INACTIVE RIBONUCLEASE-LIKE PROTEIN 9"/>
    <property type="match status" value="1"/>
</dbReference>
<dbReference type="PANTHER" id="PTHR11437">
    <property type="entry name" value="RIBONUCLEASE"/>
    <property type="match status" value="1"/>
</dbReference>
<dbReference type="Pfam" id="PF00074">
    <property type="entry name" value="RnaseA"/>
    <property type="match status" value="1"/>
</dbReference>
<dbReference type="SMART" id="SM00092">
    <property type="entry name" value="RNAse_Pc"/>
    <property type="match status" value="1"/>
</dbReference>
<dbReference type="SUPFAM" id="SSF54076">
    <property type="entry name" value="RNase A-like"/>
    <property type="match status" value="1"/>
</dbReference>
<reference key="1">
    <citation type="submission" date="2003-06" db="EMBL/GenBank/DDBJ databases">
        <title>LOC122650 on chromosome 14q11.2 is related to the RNase A superfamily and contains a unique amino-terminal pre-protein-like domain.</title>
        <authorList>
            <person name="Devor E.J."/>
            <person name="Moffat-Wilson K.A."/>
        </authorList>
    </citation>
    <scope>NUCLEOTIDE SEQUENCE [GENOMIC DNA]</scope>
</reference>
<gene>
    <name type="primary">RNASE9</name>
</gene>
<sequence>MMRTLITTHPLLLLLLLQQLLQPVQLQEVDTDFDSPDDEMEELEEYLEEFQSTGPTRPPTKENVERRVIIEPGMPLYDRDYCNEEIKRKNVYHKYRCVTEHYFLLMQYDELQKICYNRFVPCKNGVRKCNRSKGLVEGVYCNLTEALEIPGCEYKSFYRTGYVLITCAWQNEIHKLIPHTINDLVEPPKHRSFLNEDGVFVIPP</sequence>
<comment type="function">
    <text evidence="1">Does not exhibit any ribonuclease activity.</text>
</comment>
<comment type="subcellular location">
    <subcellularLocation>
        <location evidence="3">Secreted</location>
    </subcellularLocation>
</comment>
<comment type="similarity">
    <text evidence="3">Belongs to the pancreatic ribonuclease family.</text>
</comment>
<proteinExistence type="inferred from homology"/>
<keyword id="KW-1015">Disulfide bond</keyword>
<keyword id="KW-0325">Glycoprotein</keyword>
<keyword id="KW-0964">Secreted</keyword>
<keyword id="KW-0732">Signal</keyword>
<feature type="signal peptide" evidence="2">
    <location>
        <begin position="1"/>
        <end position="26"/>
    </location>
</feature>
<feature type="chain" id="PRO_0000030948" description="Inactive ribonuclease-like protein 9">
    <location>
        <begin position="27"/>
        <end position="204"/>
    </location>
</feature>
<feature type="glycosylation site" description="N-linked (GlcNAc...) asparagine" evidence="2">
    <location>
        <position position="130"/>
    </location>
</feature>
<feature type="glycosylation site" description="N-linked (GlcNAc...) asparagine" evidence="2">
    <location>
        <position position="142"/>
    </location>
</feature>
<feature type="disulfide bond" evidence="1">
    <location>
        <begin position="97"/>
        <end position="152"/>
    </location>
</feature>
<feature type="disulfide bond" evidence="1">
    <location>
        <begin position="115"/>
        <end position="167"/>
    </location>
</feature>
<feature type="disulfide bond" evidence="1">
    <location>
        <begin position="122"/>
        <end position="129"/>
    </location>
</feature>
<accession>Q7YRH1</accession>
<evidence type="ECO:0000250" key="1"/>
<evidence type="ECO:0000255" key="2"/>
<evidence type="ECO:0000305" key="3"/>
<protein>
    <recommendedName>
        <fullName>Inactive ribonuclease-like protein 9</fullName>
    </recommendedName>
</protein>
<organism>
    <name type="scientific">Chlorocebus aethiops</name>
    <name type="common">Green monkey</name>
    <name type="synonym">Cercopithecus aethiops</name>
    <dbReference type="NCBI Taxonomy" id="9534"/>
    <lineage>
        <taxon>Eukaryota</taxon>
        <taxon>Metazoa</taxon>
        <taxon>Chordata</taxon>
        <taxon>Craniata</taxon>
        <taxon>Vertebrata</taxon>
        <taxon>Euteleostomi</taxon>
        <taxon>Mammalia</taxon>
        <taxon>Eutheria</taxon>
        <taxon>Euarchontoglires</taxon>
        <taxon>Primates</taxon>
        <taxon>Haplorrhini</taxon>
        <taxon>Catarrhini</taxon>
        <taxon>Cercopithecidae</taxon>
        <taxon>Cercopithecinae</taxon>
        <taxon>Chlorocebus</taxon>
    </lineage>
</organism>